<feature type="initiator methionine" description="Removed" evidence="1">
    <location>
        <position position="1"/>
    </location>
</feature>
<feature type="chain" id="PRO_0000217201" description="Small ribosomal subunit protein bTHX">
    <location>
        <begin position="2"/>
        <end position="27"/>
    </location>
</feature>
<feature type="region of interest" description="Disordered" evidence="2">
    <location>
        <begin position="1"/>
        <end position="27"/>
    </location>
</feature>
<feature type="compositionally biased region" description="Basic residues" evidence="2">
    <location>
        <begin position="1"/>
        <end position="13"/>
    </location>
</feature>
<feature type="strand" evidence="6">
    <location>
        <begin position="6"/>
        <end position="8"/>
    </location>
</feature>
<feature type="helix" evidence="5">
    <location>
        <begin position="9"/>
        <end position="15"/>
    </location>
</feature>
<feature type="strand" evidence="4">
    <location>
        <begin position="20"/>
        <end position="22"/>
    </location>
</feature>
<dbReference type="EMBL" id="AE017221">
    <property type="protein sequence ID" value="AAS81372.1"/>
    <property type="molecule type" value="Genomic_DNA"/>
</dbReference>
<dbReference type="RefSeq" id="WP_008632889.1">
    <property type="nucleotide sequence ID" value="NZ_CP133179.1"/>
</dbReference>
<dbReference type="PDB" id="4KVB">
    <property type="method" value="X-ray"/>
    <property type="resolution" value="4.20 A"/>
    <property type="chains" value="U=1-27"/>
</dbReference>
<dbReference type="PDB" id="4V4I">
    <property type="method" value="X-ray"/>
    <property type="resolution" value="3.71 A"/>
    <property type="chains" value="v=1-27"/>
</dbReference>
<dbReference type="PDB" id="4V4J">
    <property type="method" value="X-ray"/>
    <property type="resolution" value="3.83 A"/>
    <property type="chains" value="v=1-27"/>
</dbReference>
<dbReference type="PDB" id="4V63">
    <property type="method" value="X-ray"/>
    <property type="resolution" value="3.21 A"/>
    <property type="chains" value="AU/CU=1-27"/>
</dbReference>
<dbReference type="PDB" id="4V67">
    <property type="method" value="X-ray"/>
    <property type="resolution" value="3.00 A"/>
    <property type="chains" value="AU/CU=1-27"/>
</dbReference>
<dbReference type="PDB" id="4V7P">
    <property type="method" value="X-ray"/>
    <property type="resolution" value="3.62 A"/>
    <property type="chains" value="AU/DU=2-25"/>
</dbReference>
<dbReference type="PDB" id="4V83">
    <property type="method" value="X-ray"/>
    <property type="resolution" value="3.50 A"/>
    <property type="chains" value="AU/CU=2-25"/>
</dbReference>
<dbReference type="PDB" id="4V84">
    <property type="method" value="X-ray"/>
    <property type="resolution" value="3.40 A"/>
    <property type="chains" value="AU/CU=2-25"/>
</dbReference>
<dbReference type="PDB" id="4V9N">
    <property type="method" value="X-ray"/>
    <property type="resolution" value="3.40 A"/>
    <property type="chains" value="AU/CU=2-25"/>
</dbReference>
<dbReference type="PDB" id="4V9Q">
    <property type="method" value="X-ray"/>
    <property type="resolution" value="3.40 A"/>
    <property type="chains" value="BU/DU=2-25"/>
</dbReference>
<dbReference type="PDB" id="4XEJ">
    <property type="method" value="X-ray"/>
    <property type="resolution" value="3.80 A"/>
    <property type="chains" value="ATHX/BTHX=2-25"/>
</dbReference>
<dbReference type="PDB" id="5J4D">
    <property type="method" value="X-ray"/>
    <property type="resolution" value="3.10 A"/>
    <property type="chains" value="DB/ID=1-27"/>
</dbReference>
<dbReference type="PDB" id="5V8I">
    <property type="method" value="X-ray"/>
    <property type="resolution" value="3.25 A"/>
    <property type="chains" value="1u/2u=1-27"/>
</dbReference>
<dbReference type="PDB" id="6B4V">
    <property type="method" value="X-ray"/>
    <property type="resolution" value="3.40 A"/>
    <property type="chains" value="DB/HD=1-27"/>
</dbReference>
<dbReference type="PDB" id="6BOH">
    <property type="method" value="X-ray"/>
    <property type="resolution" value="3.40 A"/>
    <property type="chains" value="EB/JD=1-27"/>
</dbReference>
<dbReference type="PDB" id="6BOK">
    <property type="method" value="X-ray"/>
    <property type="resolution" value="3.55 A"/>
    <property type="chains" value="CB/FD=1-27"/>
</dbReference>
<dbReference type="PDB" id="6N1D">
    <property type="method" value="X-ray"/>
    <property type="resolution" value="3.20 A"/>
    <property type="chains" value="ATHX/BTHX=2-27"/>
</dbReference>
<dbReference type="PDBsum" id="4KVB"/>
<dbReference type="PDBsum" id="4V4I"/>
<dbReference type="PDBsum" id="4V4J"/>
<dbReference type="PDBsum" id="4V63"/>
<dbReference type="PDBsum" id="4V67"/>
<dbReference type="PDBsum" id="4V7P"/>
<dbReference type="PDBsum" id="4V83"/>
<dbReference type="PDBsum" id="4V84"/>
<dbReference type="PDBsum" id="4V9N"/>
<dbReference type="PDBsum" id="4V9Q"/>
<dbReference type="PDBsum" id="4XEJ"/>
<dbReference type="PDBsum" id="5J4D"/>
<dbReference type="PDBsum" id="5V8I"/>
<dbReference type="PDBsum" id="6B4V"/>
<dbReference type="PDBsum" id="6BOH"/>
<dbReference type="PDBsum" id="6BOK"/>
<dbReference type="PDBsum" id="6N1D"/>
<dbReference type="SMR" id="P62613"/>
<dbReference type="IntAct" id="P62613">
    <property type="interactions" value="3"/>
</dbReference>
<dbReference type="KEGG" id="tth:TT_C1030"/>
<dbReference type="eggNOG" id="ENOG5030Q0J">
    <property type="taxonomic scope" value="Bacteria"/>
</dbReference>
<dbReference type="HOGENOM" id="CLU_209110_5_0_0"/>
<dbReference type="EvolutionaryTrace" id="P62613"/>
<dbReference type="Proteomes" id="UP000000592">
    <property type="component" value="Chromosome"/>
</dbReference>
<dbReference type="GO" id="GO:1990904">
    <property type="term" value="C:ribonucleoprotein complex"/>
    <property type="evidence" value="ECO:0007669"/>
    <property type="project" value="UniProtKB-KW"/>
</dbReference>
<dbReference type="GO" id="GO:0005840">
    <property type="term" value="C:ribosome"/>
    <property type="evidence" value="ECO:0007669"/>
    <property type="project" value="UniProtKB-KW"/>
</dbReference>
<dbReference type="GO" id="GO:0019843">
    <property type="term" value="F:rRNA binding"/>
    <property type="evidence" value="ECO:0007669"/>
    <property type="project" value="UniProtKB-KW"/>
</dbReference>
<dbReference type="InterPro" id="IPR031414">
    <property type="entry name" value="Ribosomal_bTHX"/>
</dbReference>
<dbReference type="InterPro" id="IPR030826">
    <property type="entry name" value="Ribosomal_bTHX/bTHXc/bTHXm"/>
</dbReference>
<dbReference type="NCBIfam" id="NF011339">
    <property type="entry name" value="PRK14753.1"/>
    <property type="match status" value="1"/>
</dbReference>
<dbReference type="NCBIfam" id="TIGR04560">
    <property type="entry name" value="ribo_THX"/>
    <property type="match status" value="1"/>
</dbReference>
<dbReference type="Pfam" id="PF17070">
    <property type="entry name" value="Thx"/>
    <property type="match status" value="1"/>
</dbReference>
<comment type="function">
    <text evidence="1">Binds at the top of the head of the 30S subunit. It stabilizes a number of different RNA elements and thus is important for subunit structure (By similarity).</text>
</comment>
<comment type="subunit">
    <text>Part of the 30S ribosomal subunit.</text>
</comment>
<comment type="similarity">
    <text evidence="3">Belongs to the bacterial ribosomal protein bTHX family.</text>
</comment>
<proteinExistence type="evidence at protein level"/>
<protein>
    <recommendedName>
        <fullName evidence="3">Small ribosomal subunit protein bTHX</fullName>
    </recommendedName>
    <alternativeName>
        <fullName>30S ribosomal protein Thx</fullName>
    </alternativeName>
</protein>
<sequence length="27" mass="3337">MGKGDRRTRRGKIWRGTYGKYRPRKKK</sequence>
<reference key="1">
    <citation type="journal article" date="2004" name="Nat. Biotechnol.">
        <title>The genome sequence of the extreme thermophile Thermus thermophilus.</title>
        <authorList>
            <person name="Henne A."/>
            <person name="Brueggemann H."/>
            <person name="Raasch C."/>
            <person name="Wiezer A."/>
            <person name="Hartsch T."/>
            <person name="Liesegang H."/>
            <person name="Johann A."/>
            <person name="Lienard T."/>
            <person name="Gohl O."/>
            <person name="Martinez-Arias R."/>
            <person name="Jacobi C."/>
            <person name="Starkuviene V."/>
            <person name="Schlenczeck S."/>
            <person name="Dencker S."/>
            <person name="Huber R."/>
            <person name="Klenk H.-P."/>
            <person name="Kramer W."/>
            <person name="Merkl R."/>
            <person name="Gottschalk G."/>
            <person name="Fritz H.-J."/>
        </authorList>
    </citation>
    <scope>NUCLEOTIDE SEQUENCE [LARGE SCALE GENOMIC DNA]</scope>
    <source>
        <strain>ATCC BAA-163 / DSM 7039 / HB27</strain>
    </source>
</reference>
<name>RSHX_THET2</name>
<evidence type="ECO:0000250" key="1"/>
<evidence type="ECO:0000256" key="2">
    <source>
        <dbReference type="SAM" id="MobiDB-lite"/>
    </source>
</evidence>
<evidence type="ECO:0000305" key="3"/>
<evidence type="ECO:0007829" key="4">
    <source>
        <dbReference type="PDB" id="4V63"/>
    </source>
</evidence>
<evidence type="ECO:0007829" key="5">
    <source>
        <dbReference type="PDB" id="4V67"/>
    </source>
</evidence>
<evidence type="ECO:0007829" key="6">
    <source>
        <dbReference type="PDB" id="4V9N"/>
    </source>
</evidence>
<keyword id="KW-0002">3D-structure</keyword>
<keyword id="KW-0687">Ribonucleoprotein</keyword>
<keyword id="KW-0689">Ribosomal protein</keyword>
<keyword id="KW-0694">RNA-binding</keyword>
<keyword id="KW-0699">rRNA-binding</keyword>
<organism>
    <name type="scientific">Thermus thermophilus (strain ATCC BAA-163 / DSM 7039 / HB27)</name>
    <dbReference type="NCBI Taxonomy" id="262724"/>
    <lineage>
        <taxon>Bacteria</taxon>
        <taxon>Thermotogati</taxon>
        <taxon>Deinococcota</taxon>
        <taxon>Deinococci</taxon>
        <taxon>Thermales</taxon>
        <taxon>Thermaceae</taxon>
        <taxon>Thermus</taxon>
    </lineage>
</organism>
<accession>P62613</accession>
<gene>
    <name type="primary">rpsU</name>
    <name type="ordered locus">TT_C1030</name>
</gene>